<name>GLMU_ALLAM</name>
<proteinExistence type="inferred from homology"/>
<protein>
    <recommendedName>
        <fullName evidence="1">Bifunctional protein GlmU</fullName>
    </recommendedName>
    <domain>
        <recommendedName>
            <fullName evidence="1">UDP-N-acetylglucosamine pyrophosphorylase</fullName>
            <ecNumber evidence="1">2.7.7.23</ecNumber>
        </recommendedName>
        <alternativeName>
            <fullName evidence="1">N-acetylglucosamine-1-phosphate uridyltransferase</fullName>
        </alternativeName>
    </domain>
    <domain>
        <recommendedName>
            <fullName evidence="1">Glucosamine-1-phosphate N-acetyltransferase</fullName>
            <ecNumber evidence="1">2.3.1.157</ecNumber>
        </recommendedName>
    </domain>
</protein>
<reference key="1">
    <citation type="journal article" date="2009" name="J. Bacteriol.">
        <title>Genome sequences of three Agrobacterium biovars help elucidate the evolution of multichromosome genomes in bacteria.</title>
        <authorList>
            <person name="Slater S.C."/>
            <person name="Goldman B.S."/>
            <person name="Goodner B."/>
            <person name="Setubal J.C."/>
            <person name="Farrand S.K."/>
            <person name="Nester E.W."/>
            <person name="Burr T.J."/>
            <person name="Banta L."/>
            <person name="Dickerman A.W."/>
            <person name="Paulsen I."/>
            <person name="Otten L."/>
            <person name="Suen G."/>
            <person name="Welch R."/>
            <person name="Almeida N.F."/>
            <person name="Arnold F."/>
            <person name="Burton O.T."/>
            <person name="Du Z."/>
            <person name="Ewing A."/>
            <person name="Godsy E."/>
            <person name="Heisel S."/>
            <person name="Houmiel K.L."/>
            <person name="Jhaveri J."/>
            <person name="Lu J."/>
            <person name="Miller N.M."/>
            <person name="Norton S."/>
            <person name="Chen Q."/>
            <person name="Phoolcharoen W."/>
            <person name="Ohlin V."/>
            <person name="Ondrusek D."/>
            <person name="Pride N."/>
            <person name="Stricklin S.L."/>
            <person name="Sun J."/>
            <person name="Wheeler C."/>
            <person name="Wilson L."/>
            <person name="Zhu H."/>
            <person name="Wood D.W."/>
        </authorList>
    </citation>
    <scope>NUCLEOTIDE SEQUENCE [LARGE SCALE GENOMIC DNA]</scope>
    <source>
        <strain>ATCC BAA-846 / DSM 112012 / S4</strain>
    </source>
</reference>
<evidence type="ECO:0000255" key="1">
    <source>
        <dbReference type="HAMAP-Rule" id="MF_01631"/>
    </source>
</evidence>
<dbReference type="EC" id="2.7.7.23" evidence="1"/>
<dbReference type="EC" id="2.3.1.157" evidence="1"/>
<dbReference type="EMBL" id="CP000633">
    <property type="protein sequence ID" value="ACM36552.1"/>
    <property type="molecule type" value="Genomic_DNA"/>
</dbReference>
<dbReference type="RefSeq" id="WP_015915973.1">
    <property type="nucleotide sequence ID" value="NC_011989.1"/>
</dbReference>
<dbReference type="SMR" id="B9JWC4"/>
<dbReference type="STRING" id="311402.Avi_2170"/>
<dbReference type="KEGG" id="avi:Avi_2170"/>
<dbReference type="eggNOG" id="COG1207">
    <property type="taxonomic scope" value="Bacteria"/>
</dbReference>
<dbReference type="HOGENOM" id="CLU_029499_15_2_5"/>
<dbReference type="UniPathway" id="UPA00113">
    <property type="reaction ID" value="UER00532"/>
</dbReference>
<dbReference type="UniPathway" id="UPA00113">
    <property type="reaction ID" value="UER00533"/>
</dbReference>
<dbReference type="UniPathway" id="UPA00973"/>
<dbReference type="Proteomes" id="UP000001596">
    <property type="component" value="Chromosome 1"/>
</dbReference>
<dbReference type="GO" id="GO:0005737">
    <property type="term" value="C:cytoplasm"/>
    <property type="evidence" value="ECO:0007669"/>
    <property type="project" value="UniProtKB-SubCell"/>
</dbReference>
<dbReference type="GO" id="GO:0016020">
    <property type="term" value="C:membrane"/>
    <property type="evidence" value="ECO:0007669"/>
    <property type="project" value="GOC"/>
</dbReference>
<dbReference type="GO" id="GO:0019134">
    <property type="term" value="F:glucosamine-1-phosphate N-acetyltransferase activity"/>
    <property type="evidence" value="ECO:0007669"/>
    <property type="project" value="UniProtKB-UniRule"/>
</dbReference>
<dbReference type="GO" id="GO:0000287">
    <property type="term" value="F:magnesium ion binding"/>
    <property type="evidence" value="ECO:0007669"/>
    <property type="project" value="UniProtKB-UniRule"/>
</dbReference>
<dbReference type="GO" id="GO:0003977">
    <property type="term" value="F:UDP-N-acetylglucosamine diphosphorylase activity"/>
    <property type="evidence" value="ECO:0007669"/>
    <property type="project" value="UniProtKB-UniRule"/>
</dbReference>
<dbReference type="GO" id="GO:0000902">
    <property type="term" value="P:cell morphogenesis"/>
    <property type="evidence" value="ECO:0007669"/>
    <property type="project" value="UniProtKB-UniRule"/>
</dbReference>
<dbReference type="GO" id="GO:0071555">
    <property type="term" value="P:cell wall organization"/>
    <property type="evidence" value="ECO:0007669"/>
    <property type="project" value="UniProtKB-KW"/>
</dbReference>
<dbReference type="GO" id="GO:0009245">
    <property type="term" value="P:lipid A biosynthetic process"/>
    <property type="evidence" value="ECO:0007669"/>
    <property type="project" value="UniProtKB-UniRule"/>
</dbReference>
<dbReference type="GO" id="GO:0009252">
    <property type="term" value="P:peptidoglycan biosynthetic process"/>
    <property type="evidence" value="ECO:0007669"/>
    <property type="project" value="UniProtKB-UniRule"/>
</dbReference>
<dbReference type="GO" id="GO:0008360">
    <property type="term" value="P:regulation of cell shape"/>
    <property type="evidence" value="ECO:0007669"/>
    <property type="project" value="UniProtKB-KW"/>
</dbReference>
<dbReference type="GO" id="GO:0006048">
    <property type="term" value="P:UDP-N-acetylglucosamine biosynthetic process"/>
    <property type="evidence" value="ECO:0007669"/>
    <property type="project" value="UniProtKB-UniPathway"/>
</dbReference>
<dbReference type="CDD" id="cd02540">
    <property type="entry name" value="GT2_GlmU_N_bac"/>
    <property type="match status" value="1"/>
</dbReference>
<dbReference type="CDD" id="cd03353">
    <property type="entry name" value="LbH_GlmU_C"/>
    <property type="match status" value="1"/>
</dbReference>
<dbReference type="Gene3D" id="2.160.10.10">
    <property type="entry name" value="Hexapeptide repeat proteins"/>
    <property type="match status" value="1"/>
</dbReference>
<dbReference type="Gene3D" id="3.90.550.10">
    <property type="entry name" value="Spore Coat Polysaccharide Biosynthesis Protein SpsA, Chain A"/>
    <property type="match status" value="1"/>
</dbReference>
<dbReference type="HAMAP" id="MF_01631">
    <property type="entry name" value="GlmU"/>
    <property type="match status" value="1"/>
</dbReference>
<dbReference type="InterPro" id="IPR005882">
    <property type="entry name" value="Bifunctional_GlmU"/>
</dbReference>
<dbReference type="InterPro" id="IPR050065">
    <property type="entry name" value="GlmU-like"/>
</dbReference>
<dbReference type="InterPro" id="IPR038009">
    <property type="entry name" value="GlmU_C_LbH"/>
</dbReference>
<dbReference type="InterPro" id="IPR001451">
    <property type="entry name" value="Hexapep"/>
</dbReference>
<dbReference type="InterPro" id="IPR018357">
    <property type="entry name" value="Hexapep_transf_CS"/>
</dbReference>
<dbReference type="InterPro" id="IPR025877">
    <property type="entry name" value="MobA-like_NTP_Trfase"/>
</dbReference>
<dbReference type="InterPro" id="IPR029044">
    <property type="entry name" value="Nucleotide-diphossugar_trans"/>
</dbReference>
<dbReference type="InterPro" id="IPR011004">
    <property type="entry name" value="Trimer_LpxA-like_sf"/>
</dbReference>
<dbReference type="NCBIfam" id="TIGR01173">
    <property type="entry name" value="glmU"/>
    <property type="match status" value="1"/>
</dbReference>
<dbReference type="NCBIfam" id="NF010933">
    <property type="entry name" value="PRK14353.1"/>
    <property type="match status" value="1"/>
</dbReference>
<dbReference type="PANTHER" id="PTHR43584:SF3">
    <property type="entry name" value="BIFUNCTIONAL PROTEIN GLMU"/>
    <property type="match status" value="1"/>
</dbReference>
<dbReference type="PANTHER" id="PTHR43584">
    <property type="entry name" value="NUCLEOTIDYL TRANSFERASE"/>
    <property type="match status" value="1"/>
</dbReference>
<dbReference type="Pfam" id="PF00132">
    <property type="entry name" value="Hexapep"/>
    <property type="match status" value="1"/>
</dbReference>
<dbReference type="Pfam" id="PF12804">
    <property type="entry name" value="NTP_transf_3"/>
    <property type="match status" value="1"/>
</dbReference>
<dbReference type="SUPFAM" id="SSF53448">
    <property type="entry name" value="Nucleotide-diphospho-sugar transferases"/>
    <property type="match status" value="1"/>
</dbReference>
<dbReference type="SUPFAM" id="SSF51161">
    <property type="entry name" value="Trimeric LpxA-like enzymes"/>
    <property type="match status" value="1"/>
</dbReference>
<dbReference type="PROSITE" id="PS00101">
    <property type="entry name" value="HEXAPEP_TRANSFERASES"/>
    <property type="match status" value="1"/>
</dbReference>
<sequence length="452" mass="47217">MSRTCLAVILAAGDSTRMKSAMSKVLHPVAGLPMIAHVMQAIAASDIADVALVVGRDADKVTKAASIKGLSVTPFVQTERLGTGHAVLTAREALARGYDDILVAYGDAPLITPGPLLAARAALADGNDIAVIGFHTEKPTGYGRLLVEDGELVAIREEKDASDEERKVTWCNSGLMAINGAKALDLLGRIGNANAKGEYYLTDLVEIIRSLGGKAVAVDAPEAELAGCNNRAELAVIEKLWQERRRHELMLSGVSMIAPETVFLAYDTVLAQDVLIEPNVVFGPGVTVESGAVIHAFSHLEGAHVASGATVGPFARLRPGANLGEGSKVGNFCEVKKAEIGAGAKINHLTYIGDAFIGAETNIGAGTITCNYDGVNKHETRIGANAFIGSNSALVAPVTIGDGAFIASGSVITDDVPADALALGRARQEIKPERAKIIRERNMAIKAFSGKV</sequence>
<keyword id="KW-0012">Acyltransferase</keyword>
<keyword id="KW-0133">Cell shape</keyword>
<keyword id="KW-0961">Cell wall biogenesis/degradation</keyword>
<keyword id="KW-0963">Cytoplasm</keyword>
<keyword id="KW-0460">Magnesium</keyword>
<keyword id="KW-0479">Metal-binding</keyword>
<keyword id="KW-0511">Multifunctional enzyme</keyword>
<keyword id="KW-0548">Nucleotidyltransferase</keyword>
<keyword id="KW-0573">Peptidoglycan synthesis</keyword>
<keyword id="KW-1185">Reference proteome</keyword>
<keyword id="KW-0677">Repeat</keyword>
<keyword id="KW-0808">Transferase</keyword>
<feature type="chain" id="PRO_1000186389" description="Bifunctional protein GlmU">
    <location>
        <begin position="1"/>
        <end position="452"/>
    </location>
</feature>
<feature type="region of interest" description="Pyrophosphorylase" evidence="1">
    <location>
        <begin position="1"/>
        <end position="231"/>
    </location>
</feature>
<feature type="region of interest" description="Linker" evidence="1">
    <location>
        <begin position="232"/>
        <end position="252"/>
    </location>
</feature>
<feature type="region of interest" description="N-acetyltransferase" evidence="1">
    <location>
        <begin position="253"/>
        <end position="452"/>
    </location>
</feature>
<feature type="active site" description="Proton acceptor" evidence="1">
    <location>
        <position position="348"/>
    </location>
</feature>
<feature type="binding site" evidence="1">
    <location>
        <begin position="10"/>
        <end position="13"/>
    </location>
    <ligand>
        <name>UDP-N-acetyl-alpha-D-glucosamine</name>
        <dbReference type="ChEBI" id="CHEBI:57705"/>
    </ligand>
</feature>
<feature type="binding site" evidence="1">
    <location>
        <position position="24"/>
    </location>
    <ligand>
        <name>UDP-N-acetyl-alpha-D-glucosamine</name>
        <dbReference type="ChEBI" id="CHEBI:57705"/>
    </ligand>
</feature>
<feature type="binding site" evidence="1">
    <location>
        <position position="77"/>
    </location>
    <ligand>
        <name>UDP-N-acetyl-alpha-D-glucosamine</name>
        <dbReference type="ChEBI" id="CHEBI:57705"/>
    </ligand>
</feature>
<feature type="binding site" evidence="1">
    <location>
        <begin position="82"/>
        <end position="83"/>
    </location>
    <ligand>
        <name>UDP-N-acetyl-alpha-D-glucosamine</name>
        <dbReference type="ChEBI" id="CHEBI:57705"/>
    </ligand>
</feature>
<feature type="binding site" evidence="1">
    <location>
        <begin position="105"/>
        <end position="107"/>
    </location>
    <ligand>
        <name>UDP-N-acetyl-alpha-D-glucosamine</name>
        <dbReference type="ChEBI" id="CHEBI:57705"/>
    </ligand>
</feature>
<feature type="binding site" evidence="1">
    <location>
        <position position="107"/>
    </location>
    <ligand>
        <name>Mg(2+)</name>
        <dbReference type="ChEBI" id="CHEBI:18420"/>
    </ligand>
</feature>
<feature type="binding site" evidence="1">
    <location>
        <position position="143"/>
    </location>
    <ligand>
        <name>UDP-N-acetyl-alpha-D-glucosamine</name>
        <dbReference type="ChEBI" id="CHEBI:57705"/>
    </ligand>
</feature>
<feature type="binding site" evidence="1">
    <location>
        <position position="157"/>
    </location>
    <ligand>
        <name>UDP-N-acetyl-alpha-D-glucosamine</name>
        <dbReference type="ChEBI" id="CHEBI:57705"/>
    </ligand>
</feature>
<feature type="binding site" evidence="1">
    <location>
        <position position="172"/>
    </location>
    <ligand>
        <name>UDP-N-acetyl-alpha-D-glucosamine</name>
        <dbReference type="ChEBI" id="CHEBI:57705"/>
    </ligand>
</feature>
<feature type="binding site" evidence="1">
    <location>
        <position position="229"/>
    </location>
    <ligand>
        <name>Mg(2+)</name>
        <dbReference type="ChEBI" id="CHEBI:18420"/>
    </ligand>
</feature>
<feature type="binding site" evidence="1">
    <location>
        <position position="229"/>
    </location>
    <ligand>
        <name>UDP-N-acetyl-alpha-D-glucosamine</name>
        <dbReference type="ChEBI" id="CHEBI:57705"/>
    </ligand>
</feature>
<feature type="binding site" evidence="1">
    <location>
        <position position="318"/>
    </location>
    <ligand>
        <name>UDP-N-acetyl-alpha-D-glucosamine</name>
        <dbReference type="ChEBI" id="CHEBI:57705"/>
    </ligand>
</feature>
<feature type="binding site" evidence="1">
    <location>
        <position position="336"/>
    </location>
    <ligand>
        <name>UDP-N-acetyl-alpha-D-glucosamine</name>
        <dbReference type="ChEBI" id="CHEBI:57705"/>
    </ligand>
</feature>
<feature type="binding site" evidence="1">
    <location>
        <position position="351"/>
    </location>
    <ligand>
        <name>UDP-N-acetyl-alpha-D-glucosamine</name>
        <dbReference type="ChEBI" id="CHEBI:57705"/>
    </ligand>
</feature>
<feature type="binding site" evidence="1">
    <location>
        <position position="362"/>
    </location>
    <ligand>
        <name>UDP-N-acetyl-alpha-D-glucosamine</name>
        <dbReference type="ChEBI" id="CHEBI:57705"/>
    </ligand>
</feature>
<feature type="binding site" evidence="1">
    <location>
        <position position="365"/>
    </location>
    <ligand>
        <name>acetyl-CoA</name>
        <dbReference type="ChEBI" id="CHEBI:57288"/>
    </ligand>
</feature>
<feature type="binding site" evidence="1">
    <location>
        <begin position="371"/>
        <end position="372"/>
    </location>
    <ligand>
        <name>acetyl-CoA</name>
        <dbReference type="ChEBI" id="CHEBI:57288"/>
    </ligand>
</feature>
<feature type="binding site" evidence="1">
    <location>
        <position position="390"/>
    </location>
    <ligand>
        <name>acetyl-CoA</name>
        <dbReference type="ChEBI" id="CHEBI:57288"/>
    </ligand>
</feature>
<feature type="binding site" evidence="1">
    <location>
        <position position="408"/>
    </location>
    <ligand>
        <name>acetyl-CoA</name>
        <dbReference type="ChEBI" id="CHEBI:57288"/>
    </ligand>
</feature>
<feature type="binding site" evidence="1">
    <location>
        <position position="425"/>
    </location>
    <ligand>
        <name>acetyl-CoA</name>
        <dbReference type="ChEBI" id="CHEBI:57288"/>
    </ligand>
</feature>
<organism>
    <name type="scientific">Allorhizobium ampelinum (strain ATCC BAA-846 / DSM 112012 / S4)</name>
    <name type="common">Agrobacterium vitis (strain S4)</name>
    <dbReference type="NCBI Taxonomy" id="311402"/>
    <lineage>
        <taxon>Bacteria</taxon>
        <taxon>Pseudomonadati</taxon>
        <taxon>Pseudomonadota</taxon>
        <taxon>Alphaproteobacteria</taxon>
        <taxon>Hyphomicrobiales</taxon>
        <taxon>Rhizobiaceae</taxon>
        <taxon>Rhizobium/Agrobacterium group</taxon>
        <taxon>Allorhizobium</taxon>
        <taxon>Allorhizobium ampelinum</taxon>
    </lineage>
</organism>
<accession>B9JWC4</accession>
<gene>
    <name evidence="1" type="primary">glmU</name>
    <name type="ordered locus">Avi_2170</name>
</gene>
<comment type="function">
    <text evidence="1">Catalyzes the last two sequential reactions in the de novo biosynthetic pathway for UDP-N-acetylglucosamine (UDP-GlcNAc). The C-terminal domain catalyzes the transfer of acetyl group from acetyl coenzyme A to glucosamine-1-phosphate (GlcN-1-P) to produce N-acetylglucosamine-1-phosphate (GlcNAc-1-P), which is converted into UDP-GlcNAc by the transfer of uridine 5-monophosphate (from uridine 5-triphosphate), a reaction catalyzed by the N-terminal domain.</text>
</comment>
<comment type="catalytic activity">
    <reaction evidence="1">
        <text>alpha-D-glucosamine 1-phosphate + acetyl-CoA = N-acetyl-alpha-D-glucosamine 1-phosphate + CoA + H(+)</text>
        <dbReference type="Rhea" id="RHEA:13725"/>
        <dbReference type="ChEBI" id="CHEBI:15378"/>
        <dbReference type="ChEBI" id="CHEBI:57287"/>
        <dbReference type="ChEBI" id="CHEBI:57288"/>
        <dbReference type="ChEBI" id="CHEBI:57776"/>
        <dbReference type="ChEBI" id="CHEBI:58516"/>
        <dbReference type="EC" id="2.3.1.157"/>
    </reaction>
</comment>
<comment type="catalytic activity">
    <reaction evidence="1">
        <text>N-acetyl-alpha-D-glucosamine 1-phosphate + UTP + H(+) = UDP-N-acetyl-alpha-D-glucosamine + diphosphate</text>
        <dbReference type="Rhea" id="RHEA:13509"/>
        <dbReference type="ChEBI" id="CHEBI:15378"/>
        <dbReference type="ChEBI" id="CHEBI:33019"/>
        <dbReference type="ChEBI" id="CHEBI:46398"/>
        <dbReference type="ChEBI" id="CHEBI:57705"/>
        <dbReference type="ChEBI" id="CHEBI:57776"/>
        <dbReference type="EC" id="2.7.7.23"/>
    </reaction>
</comment>
<comment type="cofactor">
    <cofactor evidence="1">
        <name>Mg(2+)</name>
        <dbReference type="ChEBI" id="CHEBI:18420"/>
    </cofactor>
    <text evidence="1">Binds 1 Mg(2+) ion per subunit.</text>
</comment>
<comment type="pathway">
    <text evidence="1">Nucleotide-sugar biosynthesis; UDP-N-acetyl-alpha-D-glucosamine biosynthesis; N-acetyl-alpha-D-glucosamine 1-phosphate from alpha-D-glucosamine 6-phosphate (route II): step 2/2.</text>
</comment>
<comment type="pathway">
    <text evidence="1">Nucleotide-sugar biosynthesis; UDP-N-acetyl-alpha-D-glucosamine biosynthesis; UDP-N-acetyl-alpha-D-glucosamine from N-acetyl-alpha-D-glucosamine 1-phosphate: step 1/1.</text>
</comment>
<comment type="pathway">
    <text evidence="1">Bacterial outer membrane biogenesis; LPS lipid A biosynthesis.</text>
</comment>
<comment type="subunit">
    <text evidence="1">Homotrimer.</text>
</comment>
<comment type="subcellular location">
    <subcellularLocation>
        <location evidence="1">Cytoplasm</location>
    </subcellularLocation>
</comment>
<comment type="similarity">
    <text evidence="1">In the N-terminal section; belongs to the N-acetylglucosamine-1-phosphate uridyltransferase family.</text>
</comment>
<comment type="similarity">
    <text evidence="1">In the C-terminal section; belongs to the transferase hexapeptide repeat family.</text>
</comment>